<reference key="1">
    <citation type="journal article" date="2007" name="J. Bacteriol.">
        <title>Complete genome of acute rheumatic fever-associated serotype M5 Streptococcus pyogenes strain Manfredo.</title>
        <authorList>
            <person name="Holden M.T.G."/>
            <person name="Scott A."/>
            <person name="Cherevach I."/>
            <person name="Chillingworth T."/>
            <person name="Churcher C."/>
            <person name="Cronin A."/>
            <person name="Dowd L."/>
            <person name="Feltwell T."/>
            <person name="Hamlin N."/>
            <person name="Holroyd S."/>
            <person name="Jagels K."/>
            <person name="Moule S."/>
            <person name="Mungall K."/>
            <person name="Quail M.A."/>
            <person name="Price C."/>
            <person name="Rabbinowitsch E."/>
            <person name="Sharp S."/>
            <person name="Skelton J."/>
            <person name="Whitehead S."/>
            <person name="Barrell B.G."/>
            <person name="Kehoe M."/>
            <person name="Parkhill J."/>
        </authorList>
    </citation>
    <scope>NUCLEOTIDE SEQUENCE [LARGE SCALE GENOMIC DNA]</scope>
    <source>
        <strain>Manfredo</strain>
    </source>
</reference>
<feature type="chain" id="PRO_1000001238" description="Ribosome maturation factor RimM">
    <location>
        <begin position="1"/>
        <end position="172"/>
    </location>
</feature>
<feature type="domain" description="PRC barrel" evidence="1">
    <location>
        <begin position="96"/>
        <end position="168"/>
    </location>
</feature>
<sequence>MEYFNVGKIVNTQGLQGEMRVLSVSDFAEERFKKGSQLALFDDKDQFVQEVTIVSHRKQKNFDIIKFKDMYHINAIEKYKGYTLKVSKANQGDLQEGEFYYHQIIGMAVYEKDRLIGYVKEILQPGANDVWVVKRQGKRDLLLPYIPPVVLSVDVPNKRVDVELMEGLDDED</sequence>
<evidence type="ECO:0000255" key="1">
    <source>
        <dbReference type="HAMAP-Rule" id="MF_00014"/>
    </source>
</evidence>
<accession>A2RF49</accession>
<gene>
    <name evidence="1" type="primary">rimM</name>
    <name type="ordered locus">SpyM51153</name>
</gene>
<organism>
    <name type="scientific">Streptococcus pyogenes serotype M5 (strain Manfredo)</name>
    <dbReference type="NCBI Taxonomy" id="160491"/>
    <lineage>
        <taxon>Bacteria</taxon>
        <taxon>Bacillati</taxon>
        <taxon>Bacillota</taxon>
        <taxon>Bacilli</taxon>
        <taxon>Lactobacillales</taxon>
        <taxon>Streptococcaceae</taxon>
        <taxon>Streptococcus</taxon>
    </lineage>
</organism>
<comment type="function">
    <text evidence="1">An accessory protein needed during the final step in the assembly of 30S ribosomal subunit, possibly for assembly of the head region. Essential for efficient processing of 16S rRNA. May be needed both before and after RbfA during the maturation of 16S rRNA. It has affinity for free ribosomal 30S subunits but not for 70S ribosomes.</text>
</comment>
<comment type="subunit">
    <text evidence="1">Binds ribosomal protein uS19.</text>
</comment>
<comment type="subcellular location">
    <subcellularLocation>
        <location evidence="1">Cytoplasm</location>
    </subcellularLocation>
</comment>
<comment type="domain">
    <text evidence="1">The PRC barrel domain binds ribosomal protein uS19.</text>
</comment>
<comment type="similarity">
    <text evidence="1">Belongs to the RimM family.</text>
</comment>
<protein>
    <recommendedName>
        <fullName evidence="1">Ribosome maturation factor RimM</fullName>
    </recommendedName>
</protein>
<name>RIMM_STRPG</name>
<keyword id="KW-0143">Chaperone</keyword>
<keyword id="KW-0963">Cytoplasm</keyword>
<keyword id="KW-0690">Ribosome biogenesis</keyword>
<keyword id="KW-0698">rRNA processing</keyword>
<proteinExistence type="inferred from homology"/>
<dbReference type="EMBL" id="AM295007">
    <property type="protein sequence ID" value="CAM30478.1"/>
    <property type="molecule type" value="Genomic_DNA"/>
</dbReference>
<dbReference type="RefSeq" id="WP_011184395.1">
    <property type="nucleotide sequence ID" value="NC_009332.1"/>
</dbReference>
<dbReference type="SMR" id="A2RF49"/>
<dbReference type="KEGG" id="spf:SpyM51153"/>
<dbReference type="HOGENOM" id="CLU_077636_3_1_9"/>
<dbReference type="GO" id="GO:0005737">
    <property type="term" value="C:cytoplasm"/>
    <property type="evidence" value="ECO:0007669"/>
    <property type="project" value="UniProtKB-SubCell"/>
</dbReference>
<dbReference type="GO" id="GO:0005840">
    <property type="term" value="C:ribosome"/>
    <property type="evidence" value="ECO:0007669"/>
    <property type="project" value="InterPro"/>
</dbReference>
<dbReference type="GO" id="GO:0043022">
    <property type="term" value="F:ribosome binding"/>
    <property type="evidence" value="ECO:0007669"/>
    <property type="project" value="InterPro"/>
</dbReference>
<dbReference type="GO" id="GO:0042274">
    <property type="term" value="P:ribosomal small subunit biogenesis"/>
    <property type="evidence" value="ECO:0007669"/>
    <property type="project" value="UniProtKB-UniRule"/>
</dbReference>
<dbReference type="GO" id="GO:0006364">
    <property type="term" value="P:rRNA processing"/>
    <property type="evidence" value="ECO:0007669"/>
    <property type="project" value="UniProtKB-UniRule"/>
</dbReference>
<dbReference type="Gene3D" id="2.30.30.240">
    <property type="entry name" value="PRC-barrel domain"/>
    <property type="match status" value="1"/>
</dbReference>
<dbReference type="Gene3D" id="2.40.30.60">
    <property type="entry name" value="RimM"/>
    <property type="match status" value="1"/>
</dbReference>
<dbReference type="HAMAP" id="MF_00014">
    <property type="entry name" value="Ribosome_mat_RimM"/>
    <property type="match status" value="1"/>
</dbReference>
<dbReference type="InterPro" id="IPR027275">
    <property type="entry name" value="PRC-brl_dom"/>
</dbReference>
<dbReference type="InterPro" id="IPR011033">
    <property type="entry name" value="PRC_barrel-like_sf"/>
</dbReference>
<dbReference type="InterPro" id="IPR011961">
    <property type="entry name" value="RimM"/>
</dbReference>
<dbReference type="InterPro" id="IPR002676">
    <property type="entry name" value="RimM_N"/>
</dbReference>
<dbReference type="InterPro" id="IPR036976">
    <property type="entry name" value="RimM_N_sf"/>
</dbReference>
<dbReference type="InterPro" id="IPR009000">
    <property type="entry name" value="Transl_B-barrel_sf"/>
</dbReference>
<dbReference type="NCBIfam" id="TIGR02273">
    <property type="entry name" value="16S_RimM"/>
    <property type="match status" value="1"/>
</dbReference>
<dbReference type="PANTHER" id="PTHR33692">
    <property type="entry name" value="RIBOSOME MATURATION FACTOR RIMM"/>
    <property type="match status" value="1"/>
</dbReference>
<dbReference type="PANTHER" id="PTHR33692:SF1">
    <property type="entry name" value="RIBOSOME MATURATION FACTOR RIMM"/>
    <property type="match status" value="1"/>
</dbReference>
<dbReference type="Pfam" id="PF05239">
    <property type="entry name" value="PRC"/>
    <property type="match status" value="1"/>
</dbReference>
<dbReference type="Pfam" id="PF01782">
    <property type="entry name" value="RimM"/>
    <property type="match status" value="1"/>
</dbReference>
<dbReference type="SUPFAM" id="SSF50346">
    <property type="entry name" value="PRC-barrel domain"/>
    <property type="match status" value="1"/>
</dbReference>
<dbReference type="SUPFAM" id="SSF50447">
    <property type="entry name" value="Translation proteins"/>
    <property type="match status" value="1"/>
</dbReference>